<gene>
    <name type="primary">AMPP</name>
    <name type="ORF">CPC735_027280</name>
</gene>
<evidence type="ECO:0000250" key="1"/>
<evidence type="ECO:0000305" key="2"/>
<keyword id="KW-0031">Aminopeptidase</keyword>
<keyword id="KW-0378">Hydrolase</keyword>
<keyword id="KW-0464">Manganese</keyword>
<keyword id="KW-0479">Metal-binding</keyword>
<keyword id="KW-0482">Metalloprotease</keyword>
<keyword id="KW-0645">Protease</keyword>
<reference key="1">
    <citation type="journal article" date="2009" name="Genome Res.">
        <title>Comparative genomic analyses of the human fungal pathogens Coccidioides and their relatives.</title>
        <authorList>
            <person name="Sharpton T.J."/>
            <person name="Stajich J.E."/>
            <person name="Rounsley S.D."/>
            <person name="Gardner M.J."/>
            <person name="Wortman J.R."/>
            <person name="Jordar V.S."/>
            <person name="Maiti R."/>
            <person name="Kodira C.D."/>
            <person name="Neafsey D.E."/>
            <person name="Zeng Q."/>
            <person name="Hung C.-Y."/>
            <person name="McMahan C."/>
            <person name="Muszewska A."/>
            <person name="Grynberg M."/>
            <person name="Mandel M.A."/>
            <person name="Kellner E.M."/>
            <person name="Barker B.M."/>
            <person name="Galgiani J.N."/>
            <person name="Orbach M.J."/>
            <person name="Kirkland T.N."/>
            <person name="Cole G.T."/>
            <person name="Henn M.R."/>
            <person name="Birren B.W."/>
            <person name="Taylor J.W."/>
        </authorList>
    </citation>
    <scope>NUCLEOTIDE SEQUENCE [LARGE SCALE GENOMIC DNA]</scope>
    <source>
        <strain>C735</strain>
    </source>
</reference>
<dbReference type="EC" id="3.4.11.9"/>
<dbReference type="EMBL" id="ACFW01000025">
    <property type="protein sequence ID" value="EER27392.1"/>
    <property type="molecule type" value="Genomic_DNA"/>
</dbReference>
<dbReference type="RefSeq" id="XP_003069537.1">
    <property type="nucleotide sequence ID" value="XM_003069491.1"/>
</dbReference>
<dbReference type="SMR" id="C5P7J2"/>
<dbReference type="MEROPS" id="M24.009"/>
<dbReference type="KEGG" id="cpw:9695032"/>
<dbReference type="VEuPathDB" id="FungiDB:CPC735_027280"/>
<dbReference type="HOGENOM" id="CLU_011781_2_3_1"/>
<dbReference type="OrthoDB" id="9995434at2759"/>
<dbReference type="Proteomes" id="UP000009084">
    <property type="component" value="Unassembled WGS sequence"/>
</dbReference>
<dbReference type="GO" id="GO:0005737">
    <property type="term" value="C:cytoplasm"/>
    <property type="evidence" value="ECO:0007669"/>
    <property type="project" value="UniProtKB-ARBA"/>
</dbReference>
<dbReference type="GO" id="GO:0046872">
    <property type="term" value="F:metal ion binding"/>
    <property type="evidence" value="ECO:0007669"/>
    <property type="project" value="UniProtKB-KW"/>
</dbReference>
<dbReference type="GO" id="GO:0070006">
    <property type="term" value="F:metalloaminopeptidase activity"/>
    <property type="evidence" value="ECO:0007669"/>
    <property type="project" value="InterPro"/>
</dbReference>
<dbReference type="GO" id="GO:0006508">
    <property type="term" value="P:proteolysis"/>
    <property type="evidence" value="ECO:0007669"/>
    <property type="project" value="UniProtKB-KW"/>
</dbReference>
<dbReference type="CDD" id="cd01085">
    <property type="entry name" value="APP"/>
    <property type="match status" value="1"/>
</dbReference>
<dbReference type="FunFam" id="3.40.350.10:FF:000010">
    <property type="entry name" value="Probable Xaa-Pro aminopeptidase P"/>
    <property type="match status" value="1"/>
</dbReference>
<dbReference type="FunFam" id="3.90.230.10:FF:000007">
    <property type="entry name" value="Xaa-Pro aminopeptidase P"/>
    <property type="match status" value="1"/>
</dbReference>
<dbReference type="FunFam" id="3.40.350.10:FF:000003">
    <property type="entry name" value="Xaa-pro aminopeptidase P"/>
    <property type="match status" value="1"/>
</dbReference>
<dbReference type="Gene3D" id="3.90.230.10">
    <property type="entry name" value="Creatinase/methionine aminopeptidase superfamily"/>
    <property type="match status" value="1"/>
</dbReference>
<dbReference type="Gene3D" id="3.40.350.10">
    <property type="entry name" value="Creatinase/prolidase N-terminal domain"/>
    <property type="match status" value="2"/>
</dbReference>
<dbReference type="InterPro" id="IPR029149">
    <property type="entry name" value="Creatin/AminoP/Spt16_N"/>
</dbReference>
<dbReference type="InterPro" id="IPR036005">
    <property type="entry name" value="Creatinase/aminopeptidase-like"/>
</dbReference>
<dbReference type="InterPro" id="IPR000587">
    <property type="entry name" value="Creatinase_N"/>
</dbReference>
<dbReference type="InterPro" id="IPR000994">
    <property type="entry name" value="Pept_M24"/>
</dbReference>
<dbReference type="InterPro" id="IPR033740">
    <property type="entry name" value="Pept_M24B"/>
</dbReference>
<dbReference type="InterPro" id="IPR032416">
    <property type="entry name" value="Peptidase_M24_C"/>
</dbReference>
<dbReference type="InterPro" id="IPR001131">
    <property type="entry name" value="Peptidase_M24B_aminopep-P_CS"/>
</dbReference>
<dbReference type="InterPro" id="IPR050422">
    <property type="entry name" value="X-Pro_aminopeptidase_P"/>
</dbReference>
<dbReference type="PANTHER" id="PTHR43763">
    <property type="entry name" value="XAA-PRO AMINOPEPTIDASE 1"/>
    <property type="match status" value="1"/>
</dbReference>
<dbReference type="PANTHER" id="PTHR43763:SF6">
    <property type="entry name" value="XAA-PRO AMINOPEPTIDASE 1"/>
    <property type="match status" value="1"/>
</dbReference>
<dbReference type="Pfam" id="PF01321">
    <property type="entry name" value="Creatinase_N"/>
    <property type="match status" value="1"/>
</dbReference>
<dbReference type="Pfam" id="PF16189">
    <property type="entry name" value="Creatinase_N_2"/>
    <property type="match status" value="1"/>
</dbReference>
<dbReference type="Pfam" id="PF00557">
    <property type="entry name" value="Peptidase_M24"/>
    <property type="match status" value="1"/>
</dbReference>
<dbReference type="Pfam" id="PF16188">
    <property type="entry name" value="Peptidase_M24_C"/>
    <property type="match status" value="1"/>
</dbReference>
<dbReference type="SUPFAM" id="SSF55920">
    <property type="entry name" value="Creatinase/aminopeptidase"/>
    <property type="match status" value="1"/>
</dbReference>
<dbReference type="SUPFAM" id="SSF53092">
    <property type="entry name" value="Creatinase/prolidase N-terminal domain"/>
    <property type="match status" value="1"/>
</dbReference>
<dbReference type="PROSITE" id="PS00491">
    <property type="entry name" value="PROLINE_PEPTIDASE"/>
    <property type="match status" value="1"/>
</dbReference>
<sequence>MTLFRSSLRLRLPVTLLSPPPIHKHSRLFSASHRLFTAAEMPVDTSQRLAKLRELMKERHVDVYLIPSEDSHQSEYIAPCDARRAFISGFTGSAGCAIVSMSKAALSTDGRYFNQAAKQLDENWLLLKRGMENVPTWQEWTAEQAEGGKVVGVDPSLITAAEARKLSDTIKNTGGSLVGVPDNLVDLVWGGDRPARPREKVMVHPIEFAGQSFEEKITDLRKELTKKKRAGMVISMLDEIAWLYNLRGADIPFNPVFFAYAIVTHSTAELFVDEAKLTQAVKEHLGDKVALRPYESIFESLKLLSQAAASNGDEGHQKFLLSDKASWSLNLALGGEEKVEEVRSPIADAKAVKNAVELEGTRACHIRDGAALTEYFAWLENELINKKTVLNEVDASDKLAQIRSKHKDFVGLSFDTISSTGPNAAIIHYRAERGNCPNIDPNAVYLCDSGAQYLDGTTDTTRTLHFGKPTEMEKKAYTLVLKGLISIDTAVFPKGTTGYAIDAFARQHLWRNGLDYLHGTGHGVGSYLNVHEGPMGIGTRVQYAETPITAGNVLSDEPGYYEDGNFGIRIENIVVAKEVKTPHKFGDKPWIGFEHVTMTPLCQNLMDTSLLTAEEKKWVNDYHTEVWEKTKGFFNNDELTRNWLKRETQPI</sequence>
<name>AMPP1_COCP7</name>
<feature type="chain" id="PRO_0000411787" description="Probable Xaa-Pro aminopeptidase P">
    <location>
        <begin position="1"/>
        <end position="651"/>
    </location>
</feature>
<feature type="binding site" evidence="1">
    <location>
        <position position="448"/>
    </location>
    <ligand>
        <name>Mn(2+)</name>
        <dbReference type="ChEBI" id="CHEBI:29035"/>
        <label>2</label>
    </ligand>
</feature>
<feature type="binding site" evidence="1">
    <location>
        <position position="459"/>
    </location>
    <ligand>
        <name>Mn(2+)</name>
        <dbReference type="ChEBI" id="CHEBI:29035"/>
        <label>1</label>
    </ligand>
</feature>
<feature type="binding site" evidence="1">
    <location>
        <position position="459"/>
    </location>
    <ligand>
        <name>Mn(2+)</name>
        <dbReference type="ChEBI" id="CHEBI:29035"/>
        <label>2</label>
    </ligand>
</feature>
<feature type="binding site" evidence="1">
    <location>
        <position position="557"/>
    </location>
    <ligand>
        <name>Mn(2+)</name>
        <dbReference type="ChEBI" id="CHEBI:29035"/>
        <label>1</label>
    </ligand>
</feature>
<feature type="binding site" evidence="1">
    <location>
        <position position="571"/>
    </location>
    <ligand>
        <name>Mn(2+)</name>
        <dbReference type="ChEBI" id="CHEBI:29035"/>
        <label>1</label>
    </ligand>
</feature>
<feature type="binding site" evidence="1">
    <location>
        <position position="571"/>
    </location>
    <ligand>
        <name>Mn(2+)</name>
        <dbReference type="ChEBI" id="CHEBI:29035"/>
        <label>2</label>
    </ligand>
</feature>
<accession>C5P7J2</accession>
<protein>
    <recommendedName>
        <fullName>Probable Xaa-Pro aminopeptidase P</fullName>
        <shortName>AMPP</shortName>
        <shortName>Aminopeptidase P</shortName>
        <ecNumber>3.4.11.9</ecNumber>
    </recommendedName>
    <alternativeName>
        <fullName>Aminoacylproline aminopeptidase</fullName>
    </alternativeName>
    <alternativeName>
        <fullName>Prolidase</fullName>
    </alternativeName>
</protein>
<proteinExistence type="inferred from homology"/>
<organism>
    <name type="scientific">Coccidioides posadasii (strain C735)</name>
    <name type="common">Valley fever fungus</name>
    <dbReference type="NCBI Taxonomy" id="222929"/>
    <lineage>
        <taxon>Eukaryota</taxon>
        <taxon>Fungi</taxon>
        <taxon>Dikarya</taxon>
        <taxon>Ascomycota</taxon>
        <taxon>Pezizomycotina</taxon>
        <taxon>Eurotiomycetes</taxon>
        <taxon>Eurotiomycetidae</taxon>
        <taxon>Onygenales</taxon>
        <taxon>Onygenaceae</taxon>
        <taxon>Coccidioides</taxon>
    </lineage>
</organism>
<comment type="function">
    <text evidence="1">Catalyzes the removal of a penultimate prolyl residue from the N-termini of peptides.</text>
</comment>
<comment type="catalytic activity">
    <reaction>
        <text>Release of any N-terminal amino acid, including proline, that is linked to proline, even from a dipeptide or tripeptide.</text>
        <dbReference type="EC" id="3.4.11.9"/>
    </reaction>
</comment>
<comment type="cofactor">
    <cofactor evidence="1">
        <name>Mn(2+)</name>
        <dbReference type="ChEBI" id="CHEBI:29035"/>
    </cofactor>
    <text evidence="1">Binds 2 manganese ions per subunit.</text>
</comment>
<comment type="similarity">
    <text evidence="2">Belongs to the peptidase M24B family.</text>
</comment>